<organism>
    <name type="scientific">Bartonella bacilliformis (strain ATCC 35685 / KC583 / Herrer 020/F12,63)</name>
    <dbReference type="NCBI Taxonomy" id="360095"/>
    <lineage>
        <taxon>Bacteria</taxon>
        <taxon>Pseudomonadati</taxon>
        <taxon>Pseudomonadota</taxon>
        <taxon>Alphaproteobacteria</taxon>
        <taxon>Hyphomicrobiales</taxon>
        <taxon>Bartonellaceae</taxon>
        <taxon>Bartonella</taxon>
    </lineage>
</organism>
<protein>
    <recommendedName>
        <fullName evidence="1">DNA-directed RNA polymerase subunit beta</fullName>
        <shortName evidence="1">RNAP subunit beta</shortName>
        <ecNumber evidence="1">2.7.7.6</ecNumber>
    </recommendedName>
    <alternativeName>
        <fullName evidence="1">RNA polymerase subunit beta</fullName>
    </alternativeName>
    <alternativeName>
        <fullName evidence="1">Transcriptase subunit beta</fullName>
    </alternativeName>
</protein>
<feature type="chain" id="PRO_0000300282" description="DNA-directed RNA polymerase subunit beta">
    <location>
        <begin position="1"/>
        <end position="1383"/>
    </location>
</feature>
<proteinExistence type="inferred from homology"/>
<comment type="function">
    <text evidence="1">DNA-dependent RNA polymerase catalyzes the transcription of DNA into RNA using the four ribonucleoside triphosphates as substrates.</text>
</comment>
<comment type="catalytic activity">
    <reaction evidence="1">
        <text>RNA(n) + a ribonucleoside 5'-triphosphate = RNA(n+1) + diphosphate</text>
        <dbReference type="Rhea" id="RHEA:21248"/>
        <dbReference type="Rhea" id="RHEA-COMP:14527"/>
        <dbReference type="Rhea" id="RHEA-COMP:17342"/>
        <dbReference type="ChEBI" id="CHEBI:33019"/>
        <dbReference type="ChEBI" id="CHEBI:61557"/>
        <dbReference type="ChEBI" id="CHEBI:140395"/>
        <dbReference type="EC" id="2.7.7.6"/>
    </reaction>
</comment>
<comment type="subunit">
    <text evidence="1">The RNAP catalytic core consists of 2 alpha, 1 beta, 1 beta' and 1 omega subunit. When a sigma factor is associated with the core the holoenzyme is formed, which can initiate transcription.</text>
</comment>
<comment type="similarity">
    <text evidence="1">Belongs to the RNA polymerase beta chain family.</text>
</comment>
<accession>A1USC8</accession>
<dbReference type="EC" id="2.7.7.6" evidence="1"/>
<dbReference type="EMBL" id="CP000524">
    <property type="protein sequence ID" value="ABM45609.1"/>
    <property type="molecule type" value="Genomic_DNA"/>
</dbReference>
<dbReference type="RefSeq" id="WP_005766719.1">
    <property type="nucleotide sequence ID" value="NC_008783.1"/>
</dbReference>
<dbReference type="SMR" id="A1USC8"/>
<dbReference type="STRING" id="360095.BARBAKC583_0571"/>
<dbReference type="GeneID" id="4683812"/>
<dbReference type="KEGG" id="bbk:BARBAKC583_0571"/>
<dbReference type="PATRIC" id="fig|360095.6.peg.552"/>
<dbReference type="eggNOG" id="COG0085">
    <property type="taxonomic scope" value="Bacteria"/>
</dbReference>
<dbReference type="HOGENOM" id="CLU_000524_4_3_5"/>
<dbReference type="OrthoDB" id="9803954at2"/>
<dbReference type="Proteomes" id="UP000000643">
    <property type="component" value="Chromosome"/>
</dbReference>
<dbReference type="GO" id="GO:0000428">
    <property type="term" value="C:DNA-directed RNA polymerase complex"/>
    <property type="evidence" value="ECO:0007669"/>
    <property type="project" value="UniProtKB-KW"/>
</dbReference>
<dbReference type="GO" id="GO:0003677">
    <property type="term" value="F:DNA binding"/>
    <property type="evidence" value="ECO:0007669"/>
    <property type="project" value="UniProtKB-UniRule"/>
</dbReference>
<dbReference type="GO" id="GO:0003899">
    <property type="term" value="F:DNA-directed RNA polymerase activity"/>
    <property type="evidence" value="ECO:0007669"/>
    <property type="project" value="UniProtKB-UniRule"/>
</dbReference>
<dbReference type="GO" id="GO:0032549">
    <property type="term" value="F:ribonucleoside binding"/>
    <property type="evidence" value="ECO:0007669"/>
    <property type="project" value="InterPro"/>
</dbReference>
<dbReference type="GO" id="GO:0006351">
    <property type="term" value="P:DNA-templated transcription"/>
    <property type="evidence" value="ECO:0007669"/>
    <property type="project" value="UniProtKB-UniRule"/>
</dbReference>
<dbReference type="CDD" id="cd00653">
    <property type="entry name" value="RNA_pol_B_RPB2"/>
    <property type="match status" value="1"/>
</dbReference>
<dbReference type="FunFam" id="2.40.50.100:FF:000006">
    <property type="entry name" value="DNA-directed RNA polymerase subunit beta"/>
    <property type="match status" value="1"/>
</dbReference>
<dbReference type="FunFam" id="3.90.1800.10:FF:000001">
    <property type="entry name" value="DNA-directed RNA polymerase subunit beta"/>
    <property type="match status" value="1"/>
</dbReference>
<dbReference type="Gene3D" id="2.40.50.100">
    <property type="match status" value="1"/>
</dbReference>
<dbReference type="Gene3D" id="2.40.50.150">
    <property type="match status" value="1"/>
</dbReference>
<dbReference type="Gene3D" id="3.90.1100.10">
    <property type="match status" value="2"/>
</dbReference>
<dbReference type="Gene3D" id="2.30.150.10">
    <property type="entry name" value="DNA-directed RNA polymerase, beta subunit, external 1 domain"/>
    <property type="match status" value="1"/>
</dbReference>
<dbReference type="Gene3D" id="2.40.270.10">
    <property type="entry name" value="DNA-directed RNA polymerase, subunit 2, domain 6"/>
    <property type="match status" value="1"/>
</dbReference>
<dbReference type="Gene3D" id="3.90.1800.10">
    <property type="entry name" value="RNA polymerase alpha subunit dimerisation domain"/>
    <property type="match status" value="1"/>
</dbReference>
<dbReference type="HAMAP" id="MF_01321">
    <property type="entry name" value="RNApol_bact_RpoB"/>
    <property type="match status" value="1"/>
</dbReference>
<dbReference type="InterPro" id="IPR042107">
    <property type="entry name" value="DNA-dir_RNA_pol_bsu_ext_1_sf"/>
</dbReference>
<dbReference type="InterPro" id="IPR019462">
    <property type="entry name" value="DNA-dir_RNA_pol_bsu_external_1"/>
</dbReference>
<dbReference type="InterPro" id="IPR015712">
    <property type="entry name" value="DNA-dir_RNA_pol_su2"/>
</dbReference>
<dbReference type="InterPro" id="IPR007120">
    <property type="entry name" value="DNA-dir_RNAP_su2_dom"/>
</dbReference>
<dbReference type="InterPro" id="IPR037033">
    <property type="entry name" value="DNA-dir_RNAP_su2_hyb_sf"/>
</dbReference>
<dbReference type="InterPro" id="IPR010243">
    <property type="entry name" value="RNA_pol_bsu_bac"/>
</dbReference>
<dbReference type="InterPro" id="IPR007121">
    <property type="entry name" value="RNA_pol_bsu_CS"/>
</dbReference>
<dbReference type="InterPro" id="IPR007644">
    <property type="entry name" value="RNA_pol_bsu_protrusion"/>
</dbReference>
<dbReference type="InterPro" id="IPR007642">
    <property type="entry name" value="RNA_pol_Rpb2_2"/>
</dbReference>
<dbReference type="InterPro" id="IPR007645">
    <property type="entry name" value="RNA_pol_Rpb2_3"/>
</dbReference>
<dbReference type="InterPro" id="IPR007641">
    <property type="entry name" value="RNA_pol_Rpb2_7"/>
</dbReference>
<dbReference type="InterPro" id="IPR014724">
    <property type="entry name" value="RNA_pol_RPB2_OB-fold"/>
</dbReference>
<dbReference type="NCBIfam" id="NF001616">
    <property type="entry name" value="PRK00405.1"/>
    <property type="match status" value="1"/>
</dbReference>
<dbReference type="NCBIfam" id="TIGR02013">
    <property type="entry name" value="rpoB"/>
    <property type="match status" value="1"/>
</dbReference>
<dbReference type="PANTHER" id="PTHR20856">
    <property type="entry name" value="DNA-DIRECTED RNA POLYMERASE I SUBUNIT 2"/>
    <property type="match status" value="1"/>
</dbReference>
<dbReference type="Pfam" id="PF04563">
    <property type="entry name" value="RNA_pol_Rpb2_1"/>
    <property type="match status" value="1"/>
</dbReference>
<dbReference type="Pfam" id="PF04561">
    <property type="entry name" value="RNA_pol_Rpb2_2"/>
    <property type="match status" value="2"/>
</dbReference>
<dbReference type="Pfam" id="PF04565">
    <property type="entry name" value="RNA_pol_Rpb2_3"/>
    <property type="match status" value="1"/>
</dbReference>
<dbReference type="Pfam" id="PF10385">
    <property type="entry name" value="RNA_pol_Rpb2_45"/>
    <property type="match status" value="1"/>
</dbReference>
<dbReference type="Pfam" id="PF00562">
    <property type="entry name" value="RNA_pol_Rpb2_6"/>
    <property type="match status" value="1"/>
</dbReference>
<dbReference type="Pfam" id="PF04560">
    <property type="entry name" value="RNA_pol_Rpb2_7"/>
    <property type="match status" value="1"/>
</dbReference>
<dbReference type="SUPFAM" id="SSF64484">
    <property type="entry name" value="beta and beta-prime subunits of DNA dependent RNA-polymerase"/>
    <property type="match status" value="1"/>
</dbReference>
<dbReference type="PROSITE" id="PS01166">
    <property type="entry name" value="RNA_POL_BETA"/>
    <property type="match status" value="1"/>
</dbReference>
<sequence length="1383" mass="154847">MAQTLAMMSQFNGRKRVRKFFGKIPEVAEMPNLIEVQKASYDQFLMIKEPKGGRPDEGLQAVFKSVFPISDFSGTAMLEFVRYEFDAPKFDVEECRQRDLTYAAPLKVILRLIVFDIDEDTGSKDIKDIKEQGVYMGDMPLMTSNGTFIINGTERVIVSQMHRSPGVFFDHDKGKSHSSGKVLFAARVIPYRGSWLDIEFDAKDIVYARIDRRRKIPVTSFLMALGMDASDILSTFYNKVTYERVESGWRIPYSVDRFKGVKLVSDLVDAESGEVVAEAGKKLTARTAKLLVEKGLKAIRVSEDELLGSYLADDIVNYETGEIYLEAGDEIDEKVLKVLFDVGANQINILDIDHMSVGAYIRNTLKVDKNESRQDALFDIYRVMRPGEPPTIDTAEAMFHSLFFDSERYDLSAVGRVKMNLRMGLDCPDTVRVLRQEDIIGVVKMLVELRDGRGEIDDIDNLGNRRVRSVGELMENQYRVGLLRMERAIKERMSSVEIDTVMPQDLINAKPAAAAVREFFGSSQLSQFMDQTNPLSEITHKRRLSALGPGGLTRERAGFEVRDVHPTHYGRICPIETPEGPNIGLINSLATFARVNKYGFIESPYRKITDGKVTTEVVYLSAMEEAKHYVAQANSSLDSEGRFTEEFVVCRHAGEVLMVPRDHIDLMDVSPKQLVSVAASLIPFLENDDANRALMGSNMQRQAVPLIRSEAPFVGTGMEAIVARDSGAAISAKRGGIVDQVDATRIVIRATEDLDPSKSGVDIYRLQKFQRSNQSTCINQRPLVHVGDRIEKGDIIADGPSTDLGDLALGRNVLVAFMPWNGYNYEDSILLSERIVADDVFTSIHIEEFEVAARDMKLGPEEITRDIPNVAEEALRNLDEAGIVYIGAEVQPGDILVGKITPKGESPMTPEEKLLRAIFGEKASDVRDTSMRMPPGTFGTVVEVRVFNRHGVEKDERAMEIEREEIERLAKDRDDEQSILDRNVYARLAGMLKDKSAIRGPKGFEKGQKIDSTVLNNYPRSQWWQFAVDDEKVQNKIEALCNQYDESKEALQRRFMDKVEKVQRGDEMPPGVMKMVKVFVAVKRKIQPGDKMAGRHGNKGVVSRILPVEDMPFLEDGTHADIVLNPLGVPSRMNVGQILETHLGWACAGMGKKIGDLVDFYQETGDILPLRQRIENLIPDNDRNEPVRQYDDESLVKLAHQMRKGVSIATPVFDGAHEADINAMLEDAGLDSSGQVTLYDGRTGEPFDRQVTVGYIYMLKLHHLVDDKIHARSIGPYSLVTQQPLGGKAQFGGQRFGEMEVWALEAYGAAYTLQEMLTVKSDDVAGRTKVYEAIVRGDDTFEASIPESFNVLIKEMRSLGLNVKLGDAREFMAQQALPEVVEN</sequence>
<evidence type="ECO:0000255" key="1">
    <source>
        <dbReference type="HAMAP-Rule" id="MF_01321"/>
    </source>
</evidence>
<keyword id="KW-0240">DNA-directed RNA polymerase</keyword>
<keyword id="KW-0548">Nucleotidyltransferase</keyword>
<keyword id="KW-0804">Transcription</keyword>
<keyword id="KW-0808">Transferase</keyword>
<gene>
    <name evidence="1" type="primary">rpoB</name>
    <name type="ordered locus">BARBAKC583_0571</name>
</gene>
<reference key="1">
    <citation type="submission" date="2006-12" db="EMBL/GenBank/DDBJ databases">
        <authorList>
            <person name="Hendrix L."/>
            <person name="Mohamoud Y."/>
            <person name="Radune D."/>
            <person name="Shvartsbeyn A."/>
            <person name="Daugherty S."/>
            <person name="Dodson R."/>
            <person name="Durkin A.S."/>
            <person name="Harkins D."/>
            <person name="Huot H."/>
            <person name="Kothari S.P."/>
            <person name="Madupu R."/>
            <person name="Li J."/>
            <person name="Nelson W.C."/>
            <person name="Shrivastava S."/>
            <person name="Giglio M.G."/>
            <person name="Haft D."/>
            <person name="Selengut J."/>
            <person name="Fraser-Ligget C."/>
            <person name="Seshadri R."/>
        </authorList>
    </citation>
    <scope>NUCLEOTIDE SEQUENCE [LARGE SCALE GENOMIC DNA]</scope>
    <source>
        <strain>ATCC 35685 / KC583 / Herrer 020/F12,63</strain>
    </source>
</reference>
<name>RPOB_BARBK</name>